<protein>
    <recommendedName>
        <fullName>Probable E3 ubiquitin-protein ligase ARI8</fullName>
        <ecNumber evidence="2">2.3.2.31</ecNumber>
    </recommendedName>
    <alternativeName>
        <fullName>ARIADNE-like protein ARI8</fullName>
    </alternativeName>
    <alternativeName>
        <fullName>Protein ariadne homolog 8</fullName>
    </alternativeName>
    <alternativeName>
        <fullName evidence="8">RING-type E3 ubiquitin transferase ARI8</fullName>
    </alternativeName>
</protein>
<gene>
    <name type="primary">ARI8</name>
    <name type="ordered locus">At1g65430</name>
    <name type="ORF">T8F5.21</name>
</gene>
<feature type="chain" id="PRO_0000356201" description="Probable E3 ubiquitin-protein ligase ARI8">
    <location>
        <begin position="1"/>
        <end position="567"/>
    </location>
</feature>
<feature type="zinc finger region" description="RING-type 1" evidence="4">
    <location>
        <begin position="128"/>
        <end position="178"/>
    </location>
</feature>
<feature type="zinc finger region" description="IBR-type" evidence="4">
    <location>
        <begin position="197"/>
        <end position="259"/>
    </location>
</feature>
<feature type="zinc finger region" description="RING-type 2; atypical" evidence="4">
    <location>
        <begin position="286"/>
        <end position="316"/>
    </location>
</feature>
<feature type="zinc finger region" description="RanBP2-type" evidence="3">
    <location>
        <begin position="540"/>
        <end position="567"/>
    </location>
</feature>
<feature type="region of interest" description="Disordered" evidence="5">
    <location>
        <begin position="1"/>
        <end position="27"/>
    </location>
</feature>
<feature type="region of interest" description="TRIAD supradomain" evidence="4">
    <location>
        <begin position="124"/>
        <end position="337"/>
    </location>
</feature>
<feature type="region of interest" description="Disordered" evidence="5">
    <location>
        <begin position="514"/>
        <end position="543"/>
    </location>
</feature>
<feature type="compositionally biased region" description="Acidic residues" evidence="5">
    <location>
        <begin position="18"/>
        <end position="27"/>
    </location>
</feature>
<feature type="compositionally biased region" description="Low complexity" evidence="5">
    <location>
        <begin position="521"/>
        <end position="542"/>
    </location>
</feature>
<feature type="active site" evidence="4">
    <location>
        <position position="299"/>
    </location>
</feature>
<feature type="binding site" evidence="4">
    <location>
        <position position="128"/>
    </location>
    <ligand>
        <name>Zn(2+)</name>
        <dbReference type="ChEBI" id="CHEBI:29105"/>
        <label>1</label>
    </ligand>
</feature>
<feature type="binding site" evidence="4">
    <location>
        <position position="131"/>
    </location>
    <ligand>
        <name>Zn(2+)</name>
        <dbReference type="ChEBI" id="CHEBI:29105"/>
        <label>1</label>
    </ligand>
</feature>
<feature type="binding site" evidence="4">
    <location>
        <position position="145"/>
    </location>
    <ligand>
        <name>Zn(2+)</name>
        <dbReference type="ChEBI" id="CHEBI:29105"/>
        <label>2</label>
    </ligand>
</feature>
<feature type="binding site" evidence="4">
    <location>
        <position position="147"/>
    </location>
    <ligand>
        <name>Zn(2+)</name>
        <dbReference type="ChEBI" id="CHEBI:29105"/>
        <label>2</label>
    </ligand>
</feature>
<feature type="binding site" evidence="4">
    <location>
        <position position="150"/>
    </location>
    <ligand>
        <name>Zn(2+)</name>
        <dbReference type="ChEBI" id="CHEBI:29105"/>
        <label>1</label>
    </ligand>
</feature>
<feature type="binding site" evidence="4">
    <location>
        <position position="153"/>
    </location>
    <ligand>
        <name>Zn(2+)</name>
        <dbReference type="ChEBI" id="CHEBI:29105"/>
        <label>1</label>
    </ligand>
</feature>
<feature type="binding site" evidence="4">
    <location>
        <position position="173"/>
    </location>
    <ligand>
        <name>Zn(2+)</name>
        <dbReference type="ChEBI" id="CHEBI:29105"/>
        <label>2</label>
    </ligand>
</feature>
<feature type="binding site" evidence="4">
    <location>
        <position position="178"/>
    </location>
    <ligand>
        <name>Zn(2+)</name>
        <dbReference type="ChEBI" id="CHEBI:29105"/>
        <label>2</label>
    </ligand>
</feature>
<feature type="binding site" evidence="4">
    <location>
        <position position="217"/>
    </location>
    <ligand>
        <name>Zn(2+)</name>
        <dbReference type="ChEBI" id="CHEBI:29105"/>
        <label>3</label>
    </ligand>
</feature>
<feature type="binding site" evidence="4">
    <location>
        <position position="222"/>
    </location>
    <ligand>
        <name>Zn(2+)</name>
        <dbReference type="ChEBI" id="CHEBI:29105"/>
        <label>3</label>
    </ligand>
</feature>
<feature type="binding site" evidence="4">
    <location>
        <position position="239"/>
    </location>
    <ligand>
        <name>Zn(2+)</name>
        <dbReference type="ChEBI" id="CHEBI:29105"/>
        <label>3</label>
    </ligand>
</feature>
<feature type="binding site" evidence="4">
    <location>
        <position position="241"/>
    </location>
    <ligand>
        <name>Zn(2+)</name>
        <dbReference type="ChEBI" id="CHEBI:29105"/>
        <label>3</label>
    </ligand>
</feature>
<feature type="binding site" evidence="4">
    <location>
        <position position="246"/>
    </location>
    <ligand>
        <name>Zn(2+)</name>
        <dbReference type="ChEBI" id="CHEBI:29105"/>
        <label>4</label>
    </ligand>
</feature>
<feature type="binding site" evidence="4">
    <location>
        <position position="249"/>
    </location>
    <ligand>
        <name>Zn(2+)</name>
        <dbReference type="ChEBI" id="CHEBI:29105"/>
        <label>4</label>
    </ligand>
</feature>
<feature type="binding site" evidence="4">
    <location>
        <position position="254"/>
    </location>
    <ligand>
        <name>Zn(2+)</name>
        <dbReference type="ChEBI" id="CHEBI:29105"/>
        <label>4</label>
    </ligand>
</feature>
<feature type="binding site" evidence="4">
    <location>
        <position position="259"/>
    </location>
    <ligand>
        <name>Zn(2+)</name>
        <dbReference type="ChEBI" id="CHEBI:29105"/>
        <label>4</label>
    </ligand>
</feature>
<feature type="binding site" evidence="4">
    <location>
        <position position="286"/>
    </location>
    <ligand>
        <name>Zn(2+)</name>
        <dbReference type="ChEBI" id="CHEBI:29105"/>
        <label>5</label>
    </ligand>
</feature>
<feature type="binding site" evidence="4">
    <location>
        <position position="289"/>
    </location>
    <ligand>
        <name>Zn(2+)</name>
        <dbReference type="ChEBI" id="CHEBI:29105"/>
        <label>5</label>
    </ligand>
</feature>
<feature type="binding site" evidence="4">
    <location>
        <position position="304"/>
    </location>
    <ligand>
        <name>Zn(2+)</name>
        <dbReference type="ChEBI" id="CHEBI:29105"/>
        <label>5</label>
    </ligand>
</feature>
<feature type="binding site" evidence="4">
    <location>
        <position position="308"/>
    </location>
    <ligand>
        <name>Zn(2+)</name>
        <dbReference type="ChEBI" id="CHEBI:29105"/>
        <label>5</label>
    </ligand>
</feature>
<feature type="binding site" evidence="4">
    <location>
        <position position="313"/>
    </location>
    <ligand>
        <name>Zn(2+)</name>
        <dbReference type="ChEBI" id="CHEBI:29105"/>
        <label>6</label>
    </ligand>
</feature>
<feature type="binding site" evidence="4">
    <location>
        <position position="316"/>
    </location>
    <ligand>
        <name>Zn(2+)</name>
        <dbReference type="ChEBI" id="CHEBI:29105"/>
        <label>6</label>
    </ligand>
</feature>
<feature type="binding site" evidence="4">
    <location>
        <position position="323"/>
    </location>
    <ligand>
        <name>Zn(2+)</name>
        <dbReference type="ChEBI" id="CHEBI:29105"/>
        <label>6</label>
    </ligand>
</feature>
<feature type="binding site" evidence="4">
    <location>
        <position position="333"/>
    </location>
    <ligand>
        <name>Zn(2+)</name>
        <dbReference type="ChEBI" id="CHEBI:29105"/>
        <label>6</label>
    </ligand>
</feature>
<feature type="sequence variant" description="In strain: cv. Lisse-2.">
    <original>D</original>
    <variation>E</variation>
    <location>
        <position position="138"/>
    </location>
</feature>
<sequence length="567" mass="64754">MEADDDFYSGTENYSDYADSDEDDADGEYEFVDDAADDSDDLIFRRRQQNYSVLSEADICKLQEDDISRISTVLSISRNSSAILLRHYNWCVSRVHDEWFADEEKVRDAVGLLEKPVVDFPTDGELDCGICFETFLSDKLHAAACGHPFCDSCWEGYITTAINDGPGCLTLRCPDPSCRAAVGQDMINLLAPDKDKQKYTSYFVRSYVEDNRKTKWCPAPGCDYAVNFVVGSGNYDVNCRCCYSFCWNCAEEAHRPVDCDTVSKWVLKNSAESENMNWILANSKPCPKCKRPIEKNQGCMHITCTPPCKFEFCWLCLGAWTEHGEKTGGFYACNRYEAAKQDGIYDETEKRREMAKNSLERYTHYYERWATNQSSRQKALLDLKKMQTDDIEKLSDIQCQPESQLKFIIEAWLQIVECRRVLKWTYAYGFYIPDQEHGKRVFFEYLQGEAESGLERLHQCAEKELLPYLDAKGPSEDFNEFRTKLAGLTSVTKNYFENLVRALENGLSDVNSHDAYDRTSSSKSLGGKTKGSSSKASSSDSSHWPCEYCTYVNPRSTTICQMCEHGR</sequence>
<name>ARI8_ARATH</name>
<organism>
    <name type="scientific">Arabidopsis thaliana</name>
    <name type="common">Mouse-ear cress</name>
    <dbReference type="NCBI Taxonomy" id="3702"/>
    <lineage>
        <taxon>Eukaryota</taxon>
        <taxon>Viridiplantae</taxon>
        <taxon>Streptophyta</taxon>
        <taxon>Embryophyta</taxon>
        <taxon>Tracheophyta</taxon>
        <taxon>Spermatophyta</taxon>
        <taxon>Magnoliopsida</taxon>
        <taxon>eudicotyledons</taxon>
        <taxon>Gunneridae</taxon>
        <taxon>Pentapetalae</taxon>
        <taxon>rosids</taxon>
        <taxon>malvids</taxon>
        <taxon>Brassicales</taxon>
        <taxon>Brassicaceae</taxon>
        <taxon>Camelineae</taxon>
        <taxon>Arabidopsis</taxon>
    </lineage>
</organism>
<reference key="1">
    <citation type="journal article" date="2003" name="Plant Physiol.">
        <title>Identification and characterization of the ARIADNE gene family in Arabidopsis. A group of putative E3 ligases.</title>
        <authorList>
            <person name="Mladek C."/>
            <person name="Guger K."/>
            <person name="Hauser M.-T."/>
        </authorList>
    </citation>
    <scope>NUCLEOTIDE SEQUENCE [GENOMIC DNA]</scope>
    <scope>TISSUE SPECIFICITY</scope>
    <scope>NOMENCLATURE</scope>
    <scope>GENE FAMILY</scope>
    <source>
        <strain>cv. Columbia</strain>
    </source>
</reference>
<reference key="2">
    <citation type="journal article" date="2005" name="Plant Physiol.">
        <title>Functional analysis of the RING-type ubiquitin ligase family of Arabidopsis.</title>
        <authorList>
            <person name="Stone S.L."/>
            <person name="Hauksdottir H."/>
            <person name="Troy A."/>
            <person name="Herschleb J."/>
            <person name="Kraft E."/>
            <person name="Callis J."/>
        </authorList>
    </citation>
    <scope>NUCLEOTIDE SEQUENCE [MRNA]</scope>
    <source>
        <strain>cv. Columbia</strain>
        <tissue>Seedling</tissue>
    </source>
</reference>
<reference key="3">
    <citation type="journal article" date="2000" name="Nature">
        <title>Sequence and analysis of chromosome 1 of the plant Arabidopsis thaliana.</title>
        <authorList>
            <person name="Theologis A."/>
            <person name="Ecker J.R."/>
            <person name="Palm C.J."/>
            <person name="Federspiel N.A."/>
            <person name="Kaul S."/>
            <person name="White O."/>
            <person name="Alonso J."/>
            <person name="Altafi H."/>
            <person name="Araujo R."/>
            <person name="Bowman C.L."/>
            <person name="Brooks S.Y."/>
            <person name="Buehler E."/>
            <person name="Chan A."/>
            <person name="Chao Q."/>
            <person name="Chen H."/>
            <person name="Cheuk R.F."/>
            <person name="Chin C.W."/>
            <person name="Chung M.K."/>
            <person name="Conn L."/>
            <person name="Conway A.B."/>
            <person name="Conway A.R."/>
            <person name="Creasy T.H."/>
            <person name="Dewar K."/>
            <person name="Dunn P."/>
            <person name="Etgu P."/>
            <person name="Feldblyum T.V."/>
            <person name="Feng J.-D."/>
            <person name="Fong B."/>
            <person name="Fujii C.Y."/>
            <person name="Gill J.E."/>
            <person name="Goldsmith A.D."/>
            <person name="Haas B."/>
            <person name="Hansen N.F."/>
            <person name="Hughes B."/>
            <person name="Huizar L."/>
            <person name="Hunter J.L."/>
            <person name="Jenkins J."/>
            <person name="Johnson-Hopson C."/>
            <person name="Khan S."/>
            <person name="Khaykin E."/>
            <person name="Kim C.J."/>
            <person name="Koo H.L."/>
            <person name="Kremenetskaia I."/>
            <person name="Kurtz D.B."/>
            <person name="Kwan A."/>
            <person name="Lam B."/>
            <person name="Langin-Hooper S."/>
            <person name="Lee A."/>
            <person name="Lee J.M."/>
            <person name="Lenz C.A."/>
            <person name="Li J.H."/>
            <person name="Li Y.-P."/>
            <person name="Lin X."/>
            <person name="Liu S.X."/>
            <person name="Liu Z.A."/>
            <person name="Luros J.S."/>
            <person name="Maiti R."/>
            <person name="Marziali A."/>
            <person name="Militscher J."/>
            <person name="Miranda M."/>
            <person name="Nguyen M."/>
            <person name="Nierman W.C."/>
            <person name="Osborne B.I."/>
            <person name="Pai G."/>
            <person name="Peterson J."/>
            <person name="Pham P.K."/>
            <person name="Rizzo M."/>
            <person name="Rooney T."/>
            <person name="Rowley D."/>
            <person name="Sakano H."/>
            <person name="Salzberg S.L."/>
            <person name="Schwartz J.R."/>
            <person name="Shinn P."/>
            <person name="Southwick A.M."/>
            <person name="Sun H."/>
            <person name="Tallon L.J."/>
            <person name="Tambunga G."/>
            <person name="Toriumi M.J."/>
            <person name="Town C.D."/>
            <person name="Utterback T."/>
            <person name="Van Aken S."/>
            <person name="Vaysberg M."/>
            <person name="Vysotskaia V.S."/>
            <person name="Walker M."/>
            <person name="Wu D."/>
            <person name="Yu G."/>
            <person name="Fraser C.M."/>
            <person name="Venter J.C."/>
            <person name="Davis R.W."/>
        </authorList>
    </citation>
    <scope>NUCLEOTIDE SEQUENCE [LARGE SCALE GENOMIC DNA]</scope>
    <source>
        <strain>cv. Columbia</strain>
    </source>
</reference>
<reference key="4">
    <citation type="journal article" date="2017" name="Plant J.">
        <title>Araport11: a complete reannotation of the Arabidopsis thaliana reference genome.</title>
        <authorList>
            <person name="Cheng C.Y."/>
            <person name="Krishnakumar V."/>
            <person name="Chan A.P."/>
            <person name="Thibaud-Nissen F."/>
            <person name="Schobel S."/>
            <person name="Town C.D."/>
        </authorList>
    </citation>
    <scope>GENOME REANNOTATION</scope>
    <source>
        <strain>cv. Columbia</strain>
    </source>
</reference>
<reference key="5">
    <citation type="journal article" date="2003" name="Science">
        <title>Empirical analysis of transcriptional activity in the Arabidopsis genome.</title>
        <authorList>
            <person name="Yamada K."/>
            <person name="Lim J."/>
            <person name="Dale J.M."/>
            <person name="Chen H."/>
            <person name="Shinn P."/>
            <person name="Palm C.J."/>
            <person name="Southwick A.M."/>
            <person name="Wu H.C."/>
            <person name="Kim C.J."/>
            <person name="Nguyen M."/>
            <person name="Pham P.K."/>
            <person name="Cheuk R.F."/>
            <person name="Karlin-Newmann G."/>
            <person name="Liu S.X."/>
            <person name="Lam B."/>
            <person name="Sakano H."/>
            <person name="Wu T."/>
            <person name="Yu G."/>
            <person name="Miranda M."/>
            <person name="Quach H.L."/>
            <person name="Tripp M."/>
            <person name="Chang C.H."/>
            <person name="Lee J.M."/>
            <person name="Toriumi M.J."/>
            <person name="Chan M.M."/>
            <person name="Tang C.C."/>
            <person name="Onodera C.S."/>
            <person name="Deng J.M."/>
            <person name="Akiyama K."/>
            <person name="Ansari Y."/>
            <person name="Arakawa T."/>
            <person name="Banh J."/>
            <person name="Banno F."/>
            <person name="Bowser L."/>
            <person name="Brooks S.Y."/>
            <person name="Carninci P."/>
            <person name="Chao Q."/>
            <person name="Choy N."/>
            <person name="Enju A."/>
            <person name="Goldsmith A.D."/>
            <person name="Gurjal M."/>
            <person name="Hansen N.F."/>
            <person name="Hayashizaki Y."/>
            <person name="Johnson-Hopson C."/>
            <person name="Hsuan V.W."/>
            <person name="Iida K."/>
            <person name="Karnes M."/>
            <person name="Khan S."/>
            <person name="Koesema E."/>
            <person name="Ishida J."/>
            <person name="Jiang P.X."/>
            <person name="Jones T."/>
            <person name="Kawai J."/>
            <person name="Kamiya A."/>
            <person name="Meyers C."/>
            <person name="Nakajima M."/>
            <person name="Narusaka M."/>
            <person name="Seki M."/>
            <person name="Sakurai T."/>
            <person name="Satou M."/>
            <person name="Tamse R."/>
            <person name="Vaysberg M."/>
            <person name="Wallender E.K."/>
            <person name="Wong C."/>
            <person name="Yamamura Y."/>
            <person name="Yuan S."/>
            <person name="Shinozaki K."/>
            <person name="Davis R.W."/>
            <person name="Theologis A."/>
            <person name="Ecker J.R."/>
        </authorList>
    </citation>
    <scope>NUCLEOTIDE SEQUENCE [LARGE SCALE MRNA]</scope>
    <source>
        <strain>cv. Columbia</strain>
    </source>
</reference>
<reference key="6">
    <citation type="journal article" date="2003" name="Genetics">
        <title>Molecular population genetics of the Arabidopsis CLAVATA2 region: the genomic scale of variation and selection in a selfing species.</title>
        <authorList>
            <person name="Shepard K.A."/>
            <person name="Purugganan M.D."/>
        </authorList>
    </citation>
    <scope>NUCLEOTIDE SEQUENCE [GENOMIC DNA] OF 49-156</scope>
    <source>
        <strain>cv. Bla-1</strain>
        <strain>cv. Bs-1</strain>
        <strain>cv. Chi-1</strain>
        <strain>cv. Co-1</strain>
        <strain>cv. Cvi-0</strain>
        <strain>cv. Gr-3</strain>
        <strain>cv. Ita-0</strain>
        <strain>cv. Kas-1</strain>
        <strain>cv. Lisse-2</strain>
    </source>
</reference>
<reference key="7">
    <citation type="journal article" date="2002" name="Mol. Biol. Evol.">
        <title>Comparative genomics of the RBR family, including the Parkinson's disease-related gene parkin and the genes of the ariadne subfamily.</title>
        <authorList>
            <person name="Marin I."/>
            <person name="Ferrus A."/>
        </authorList>
    </citation>
    <scope>FUNCTION</scope>
</reference>
<evidence type="ECO:0000250" key="1"/>
<evidence type="ECO:0000250" key="2">
    <source>
        <dbReference type="UniProtKB" id="Q9Y4X5"/>
    </source>
</evidence>
<evidence type="ECO:0000255" key="3">
    <source>
        <dbReference type="PROSITE-ProRule" id="PRU00322"/>
    </source>
</evidence>
<evidence type="ECO:0000255" key="4">
    <source>
        <dbReference type="PROSITE-ProRule" id="PRU01221"/>
    </source>
</evidence>
<evidence type="ECO:0000256" key="5">
    <source>
        <dbReference type="SAM" id="MobiDB-lite"/>
    </source>
</evidence>
<evidence type="ECO:0000269" key="6">
    <source>
    </source>
</evidence>
<evidence type="ECO:0000269" key="7">
    <source>
    </source>
</evidence>
<evidence type="ECO:0000305" key="8"/>
<dbReference type="EC" id="2.3.2.31" evidence="2"/>
<dbReference type="EMBL" id="AJ510211">
    <property type="protein sequence ID" value="CAD52890.1"/>
    <property type="molecule type" value="Genomic_DNA"/>
</dbReference>
<dbReference type="EMBL" id="DQ086843">
    <property type="protein sequence ID" value="AAZ14067.1"/>
    <property type="molecule type" value="mRNA"/>
</dbReference>
<dbReference type="EMBL" id="AC004512">
    <property type="protein sequence ID" value="AAC27149.1"/>
    <property type="status" value="ALT_SEQ"/>
    <property type="molecule type" value="Genomic_DNA"/>
</dbReference>
<dbReference type="EMBL" id="CP002684">
    <property type="protein sequence ID" value="AEE34372.1"/>
    <property type="molecule type" value="Genomic_DNA"/>
</dbReference>
<dbReference type="EMBL" id="AY062808">
    <property type="protein sequence ID" value="AAL32886.1"/>
    <property type="molecule type" value="mRNA"/>
</dbReference>
<dbReference type="EMBL" id="AY128748">
    <property type="protein sequence ID" value="AAM91148.1"/>
    <property type="molecule type" value="mRNA"/>
</dbReference>
<dbReference type="EMBL" id="AF528630">
    <property type="protein sequence ID" value="AAO43365.1"/>
    <property type="molecule type" value="Genomic_DNA"/>
</dbReference>
<dbReference type="EMBL" id="AF528631">
    <property type="protein sequence ID" value="AAO43366.1"/>
    <property type="molecule type" value="Genomic_DNA"/>
</dbReference>
<dbReference type="EMBL" id="AF528632">
    <property type="protein sequence ID" value="AAO43367.1"/>
    <property type="molecule type" value="Genomic_DNA"/>
</dbReference>
<dbReference type="EMBL" id="AF528633">
    <property type="protein sequence ID" value="AAO43368.1"/>
    <property type="molecule type" value="Genomic_DNA"/>
</dbReference>
<dbReference type="EMBL" id="AF528634">
    <property type="protein sequence ID" value="AAO43369.1"/>
    <property type="molecule type" value="Genomic_DNA"/>
</dbReference>
<dbReference type="EMBL" id="AF528635">
    <property type="protein sequence ID" value="AAO43370.1"/>
    <property type="molecule type" value="Genomic_DNA"/>
</dbReference>
<dbReference type="EMBL" id="AF528636">
    <property type="protein sequence ID" value="AAO43371.1"/>
    <property type="molecule type" value="Genomic_DNA"/>
</dbReference>
<dbReference type="EMBL" id="AF528637">
    <property type="protein sequence ID" value="AAO43372.1"/>
    <property type="molecule type" value="Genomic_DNA"/>
</dbReference>
<dbReference type="EMBL" id="AF528638">
    <property type="protein sequence ID" value="AAO43373.1"/>
    <property type="molecule type" value="Genomic_DNA"/>
</dbReference>
<dbReference type="PIR" id="T02366">
    <property type="entry name" value="T02366"/>
</dbReference>
<dbReference type="RefSeq" id="NP_176722.2">
    <property type="nucleotide sequence ID" value="NM_105217.4"/>
</dbReference>
<dbReference type="SMR" id="Q8W468"/>
<dbReference type="BioGRID" id="28075">
    <property type="interactions" value="2"/>
</dbReference>
<dbReference type="FunCoup" id="Q8W468">
    <property type="interactions" value="964"/>
</dbReference>
<dbReference type="IntAct" id="Q8W468">
    <property type="interactions" value="1"/>
</dbReference>
<dbReference type="STRING" id="3702.Q8W468"/>
<dbReference type="PaxDb" id="3702-AT1G65430.1"/>
<dbReference type="ProteomicsDB" id="246985"/>
<dbReference type="EnsemblPlants" id="AT1G65430.1">
    <property type="protein sequence ID" value="AT1G65430.1"/>
    <property type="gene ID" value="AT1G65430"/>
</dbReference>
<dbReference type="GeneID" id="842854"/>
<dbReference type="Gramene" id="AT1G65430.1">
    <property type="protein sequence ID" value="AT1G65430.1"/>
    <property type="gene ID" value="AT1G65430"/>
</dbReference>
<dbReference type="KEGG" id="ath:AT1G65430"/>
<dbReference type="Araport" id="AT1G65430"/>
<dbReference type="TAIR" id="AT1G65430">
    <property type="gene designation" value="ARI8"/>
</dbReference>
<dbReference type="eggNOG" id="KOG1815">
    <property type="taxonomic scope" value="Eukaryota"/>
</dbReference>
<dbReference type="HOGENOM" id="CLU_009823_3_1_1"/>
<dbReference type="InParanoid" id="Q8W468"/>
<dbReference type="OMA" id="PYAYYMD"/>
<dbReference type="PhylomeDB" id="Q8W468"/>
<dbReference type="UniPathway" id="UPA00143"/>
<dbReference type="PRO" id="PR:Q8W468"/>
<dbReference type="Proteomes" id="UP000006548">
    <property type="component" value="Chromosome 1"/>
</dbReference>
<dbReference type="ExpressionAtlas" id="Q8W468">
    <property type="expression patterns" value="baseline and differential"/>
</dbReference>
<dbReference type="GO" id="GO:0004842">
    <property type="term" value="F:ubiquitin-protein transferase activity"/>
    <property type="evidence" value="ECO:0000314"/>
    <property type="project" value="TAIR"/>
</dbReference>
<dbReference type="GO" id="GO:0008270">
    <property type="term" value="F:zinc ion binding"/>
    <property type="evidence" value="ECO:0007669"/>
    <property type="project" value="UniProtKB-KW"/>
</dbReference>
<dbReference type="GO" id="GO:0016567">
    <property type="term" value="P:protein ubiquitination"/>
    <property type="evidence" value="ECO:0007669"/>
    <property type="project" value="UniProtKB-UniPathway"/>
</dbReference>
<dbReference type="CDD" id="cd20346">
    <property type="entry name" value="BRcat_RBR_ANKIB1"/>
    <property type="match status" value="1"/>
</dbReference>
<dbReference type="CDD" id="cd22583">
    <property type="entry name" value="Rcat_RBR_ARI7-like"/>
    <property type="match status" value="1"/>
</dbReference>
<dbReference type="FunFam" id="1.20.120.1750:FF:000005">
    <property type="entry name" value="RBR-type E3 ubiquitin transferase"/>
    <property type="match status" value="1"/>
</dbReference>
<dbReference type="FunFam" id="3.30.40.10:FF:000019">
    <property type="entry name" value="RBR-type E3 ubiquitin transferase"/>
    <property type="match status" value="1"/>
</dbReference>
<dbReference type="Gene3D" id="1.20.120.1750">
    <property type="match status" value="1"/>
</dbReference>
<dbReference type="Gene3D" id="3.30.40.10">
    <property type="entry name" value="Zinc/RING finger domain, C3HC4 (zinc finger)"/>
    <property type="match status" value="1"/>
</dbReference>
<dbReference type="Gene3D" id="2.30.30.380">
    <property type="entry name" value="Zn-finger domain of Sec23/24"/>
    <property type="match status" value="1"/>
</dbReference>
<dbReference type="InterPro" id="IPR045840">
    <property type="entry name" value="Ariadne"/>
</dbReference>
<dbReference type="InterPro" id="IPR048962">
    <property type="entry name" value="ARIH1-like_UBL"/>
</dbReference>
<dbReference type="InterPro" id="IPR031127">
    <property type="entry name" value="E3_UB_ligase_RBR"/>
</dbReference>
<dbReference type="InterPro" id="IPR002867">
    <property type="entry name" value="IBR_dom"/>
</dbReference>
<dbReference type="InterPro" id="IPR044066">
    <property type="entry name" value="TRIAD_supradom"/>
</dbReference>
<dbReference type="InterPro" id="IPR001876">
    <property type="entry name" value="Znf_RanBP2"/>
</dbReference>
<dbReference type="InterPro" id="IPR036443">
    <property type="entry name" value="Znf_RanBP2_sf"/>
</dbReference>
<dbReference type="InterPro" id="IPR001841">
    <property type="entry name" value="Znf_RING"/>
</dbReference>
<dbReference type="InterPro" id="IPR013083">
    <property type="entry name" value="Znf_RING/FYVE/PHD"/>
</dbReference>
<dbReference type="PANTHER" id="PTHR11685">
    <property type="entry name" value="RBR FAMILY RING FINGER AND IBR DOMAIN-CONTAINING"/>
    <property type="match status" value="1"/>
</dbReference>
<dbReference type="Pfam" id="PF19422">
    <property type="entry name" value="Ariadne"/>
    <property type="match status" value="1"/>
</dbReference>
<dbReference type="Pfam" id="PF01485">
    <property type="entry name" value="IBR"/>
    <property type="match status" value="1"/>
</dbReference>
<dbReference type="Pfam" id="PF22191">
    <property type="entry name" value="IBR_1"/>
    <property type="match status" value="1"/>
</dbReference>
<dbReference type="Pfam" id="PF21235">
    <property type="entry name" value="UBA_ARI1"/>
    <property type="match status" value="1"/>
</dbReference>
<dbReference type="SMART" id="SM00647">
    <property type="entry name" value="IBR"/>
    <property type="match status" value="2"/>
</dbReference>
<dbReference type="SMART" id="SM00547">
    <property type="entry name" value="ZnF_RBZ"/>
    <property type="match status" value="1"/>
</dbReference>
<dbReference type="SUPFAM" id="SSF90209">
    <property type="entry name" value="Ran binding protein zinc finger-like"/>
    <property type="match status" value="1"/>
</dbReference>
<dbReference type="SUPFAM" id="SSF57850">
    <property type="entry name" value="RING/U-box"/>
    <property type="match status" value="3"/>
</dbReference>
<dbReference type="PROSITE" id="PS51873">
    <property type="entry name" value="TRIAD"/>
    <property type="match status" value="1"/>
</dbReference>
<dbReference type="PROSITE" id="PS01358">
    <property type="entry name" value="ZF_RANBP2_1"/>
    <property type="match status" value="1"/>
</dbReference>
<dbReference type="PROSITE" id="PS50199">
    <property type="entry name" value="ZF_RANBP2_2"/>
    <property type="match status" value="1"/>
</dbReference>
<dbReference type="PROSITE" id="PS50089">
    <property type="entry name" value="ZF_RING_2"/>
    <property type="match status" value="1"/>
</dbReference>
<keyword id="KW-0479">Metal-binding</keyword>
<keyword id="KW-1185">Reference proteome</keyword>
<keyword id="KW-0677">Repeat</keyword>
<keyword id="KW-0808">Transferase</keyword>
<keyword id="KW-0833">Ubl conjugation pathway</keyword>
<keyword id="KW-0862">Zinc</keyword>
<keyword id="KW-0863">Zinc-finger</keyword>
<comment type="function">
    <text evidence="1 6">Might act as an E3 ubiquitin-protein ligase, or as part of E3 complex, which accepts ubiquitin from specific E2 ubiquitin-conjugating enzymes and then transfers it to substrates.</text>
</comment>
<comment type="catalytic activity">
    <reaction evidence="2">
        <text>[E2 ubiquitin-conjugating enzyme]-S-ubiquitinyl-L-cysteine + [acceptor protein]-L-lysine = [E2 ubiquitin-conjugating enzyme]-L-cysteine + [acceptor protein]-N(6)-ubiquitinyl-L-lysine.</text>
        <dbReference type="EC" id="2.3.2.31"/>
    </reaction>
</comment>
<comment type="cofactor">
    <cofactor evidence="8">
        <name>Zn(2+)</name>
        <dbReference type="ChEBI" id="CHEBI:29105"/>
    </cofactor>
    <text evidence="8">Binds 4 Zn(2+) ions per subunit.</text>
</comment>
<comment type="pathway">
    <text>Protein modification; protein ubiquitination.</text>
</comment>
<comment type="tissue specificity">
    <text evidence="7">Ubiquitous.</text>
</comment>
<comment type="domain">
    <text evidence="2">Members of the RBR family are atypical E3 ligases. They interact with the E2 conjugating enzyme UBE2L3 and function like HECT-type E3 enzymes: they bind E2s via the first RING-type zinc finger, but require an obligate trans-thiolation step during the ubiquitin transfer, requiring a conserved active site Cys residue in the second RING-type zinc finger. The active site probably forms a thioester intermediate with ubiquitin taken from the active-site cysteine of the E2 before ultimately transferring it to a Lys residue on the substrate.</text>
</comment>
<comment type="similarity">
    <text evidence="8">Belongs to the RBR family. Ariadne subfamily.</text>
</comment>
<comment type="sequence caution" evidence="8">
    <conflict type="erroneous gene model prediction">
        <sequence resource="EMBL-CDS" id="AAC27149"/>
    </conflict>
</comment>
<accession>Q8W468</accession>
<accession>O80814</accession>
<accession>Q84JP9</accession>
<accession>Q84VL9</accession>
<proteinExistence type="evidence at transcript level"/>